<organism>
    <name type="scientific">Bos taurus</name>
    <name type="common">Bovine</name>
    <dbReference type="NCBI Taxonomy" id="9913"/>
    <lineage>
        <taxon>Eukaryota</taxon>
        <taxon>Metazoa</taxon>
        <taxon>Chordata</taxon>
        <taxon>Craniata</taxon>
        <taxon>Vertebrata</taxon>
        <taxon>Euteleostomi</taxon>
        <taxon>Mammalia</taxon>
        <taxon>Eutheria</taxon>
        <taxon>Laurasiatheria</taxon>
        <taxon>Artiodactyla</taxon>
        <taxon>Ruminantia</taxon>
        <taxon>Pecora</taxon>
        <taxon>Bovidae</taxon>
        <taxon>Bovinae</taxon>
        <taxon>Bos</taxon>
    </lineage>
</organism>
<feature type="chain" id="PRO_0000221168" description="Transmembrane protein 14A">
    <location>
        <begin position="1"/>
        <end position="99"/>
    </location>
</feature>
<feature type="transmembrane region" description="Helical" evidence="2">
    <location>
        <begin position="1"/>
        <end position="21"/>
    </location>
</feature>
<feature type="transmembrane region" description="Helical" evidence="2">
    <location>
        <begin position="24"/>
        <end position="44"/>
    </location>
</feature>
<feature type="transmembrane region" description="Helical" evidence="2">
    <location>
        <begin position="79"/>
        <end position="99"/>
    </location>
</feature>
<accession>P56982</accession>
<accession>Q3ZC76</accession>
<proteinExistence type="inferred from homology"/>
<reference key="1">
    <citation type="submission" date="2005-08" db="EMBL/GenBank/DDBJ databases">
        <authorList>
            <consortium name="NIH - Mammalian Gene Collection (MGC) project"/>
        </authorList>
    </citation>
    <scope>NUCLEOTIDE SEQUENCE [LARGE SCALE MRNA]</scope>
    <source>
        <strain>Crossbred X Angus</strain>
        <tissue>Ileum</tissue>
    </source>
</reference>
<name>TM14A_BOVIN</name>
<sequence>MDLIGFGYAALVTFGSILGYKRRGGVLSLIAGLFVGFLAGYGAYRVSNDKRDVKLSLFTAFFLATIMGVRFKRSKKIMPAGLVAGLSLLMILRLVLLLL</sequence>
<evidence type="ECO:0000250" key="1">
    <source>
        <dbReference type="UniProtKB" id="Q9Y6G1"/>
    </source>
</evidence>
<evidence type="ECO:0000255" key="2"/>
<evidence type="ECO:0000305" key="3"/>
<gene>
    <name type="primary">TMEM14A</name>
</gene>
<comment type="function">
    <text evidence="1">Inhibits apoptosis via negative regulation of the mitochondrial outer membrane permeabilization involved in apoptotic signaling pathway.</text>
</comment>
<comment type="subcellular location">
    <subcellularLocation>
        <location evidence="1">Mitochondrion membrane</location>
        <topology evidence="2">Multi-pass membrane protein</topology>
    </subcellularLocation>
    <subcellularLocation>
        <location evidence="1">Endoplasmic reticulum membrane</location>
    </subcellularLocation>
</comment>
<comment type="similarity">
    <text evidence="3">Belongs to the TMEM14 family.</text>
</comment>
<keyword id="KW-0256">Endoplasmic reticulum</keyword>
<keyword id="KW-0472">Membrane</keyword>
<keyword id="KW-0496">Mitochondrion</keyword>
<keyword id="KW-1185">Reference proteome</keyword>
<keyword id="KW-0812">Transmembrane</keyword>
<keyword id="KW-1133">Transmembrane helix</keyword>
<protein>
    <recommendedName>
        <fullName>Transmembrane protein 14A</fullName>
    </recommendedName>
</protein>
<dbReference type="EMBL" id="BC102864">
    <property type="protein sequence ID" value="AAI02865.1"/>
    <property type="molecule type" value="mRNA"/>
</dbReference>
<dbReference type="RefSeq" id="NP_001029551.1">
    <property type="nucleotide sequence ID" value="NM_001034379.1"/>
</dbReference>
<dbReference type="RefSeq" id="XP_005223462.1">
    <property type="nucleotide sequence ID" value="XM_005223405.5"/>
</dbReference>
<dbReference type="RefSeq" id="XP_005223463.1">
    <property type="nucleotide sequence ID" value="XM_005223406.5"/>
</dbReference>
<dbReference type="RefSeq" id="XP_005223464.1">
    <property type="nucleotide sequence ID" value="XM_005223407.5"/>
</dbReference>
<dbReference type="RefSeq" id="XP_010816477.1">
    <property type="nucleotide sequence ID" value="XM_010818175.1"/>
</dbReference>
<dbReference type="RefSeq" id="XP_024839283.1">
    <property type="nucleotide sequence ID" value="XM_024983515.2"/>
</dbReference>
<dbReference type="RefSeq" id="XP_024839284.1">
    <property type="nucleotide sequence ID" value="XM_024983516.2"/>
</dbReference>
<dbReference type="RefSeq" id="XP_024839285.1">
    <property type="nucleotide sequence ID" value="XM_024983517.2"/>
</dbReference>
<dbReference type="FunCoup" id="P56982">
    <property type="interactions" value="1716"/>
</dbReference>
<dbReference type="STRING" id="9913.ENSBTAP00000006857"/>
<dbReference type="PaxDb" id="9913-ENSBTAP00000006857"/>
<dbReference type="GeneID" id="510383"/>
<dbReference type="KEGG" id="bta:510383"/>
<dbReference type="CTD" id="28978"/>
<dbReference type="VEuPathDB" id="HostDB:ENSBTAG00000005206"/>
<dbReference type="eggNOG" id="KOG4267">
    <property type="taxonomic scope" value="Eukaryota"/>
</dbReference>
<dbReference type="HOGENOM" id="CLU_096652_4_3_1"/>
<dbReference type="InParanoid" id="P56982"/>
<dbReference type="OMA" id="MGTRYKK"/>
<dbReference type="OrthoDB" id="5620at2759"/>
<dbReference type="TreeFam" id="TF323345"/>
<dbReference type="Proteomes" id="UP000009136">
    <property type="component" value="Chromosome 23"/>
</dbReference>
<dbReference type="Bgee" id="ENSBTAG00000005206">
    <property type="expression patterns" value="Expressed in caput epididymis and 102 other cell types or tissues"/>
</dbReference>
<dbReference type="GO" id="GO:0005789">
    <property type="term" value="C:endoplasmic reticulum membrane"/>
    <property type="evidence" value="ECO:0000250"/>
    <property type="project" value="UniProtKB"/>
</dbReference>
<dbReference type="GO" id="GO:0031966">
    <property type="term" value="C:mitochondrial membrane"/>
    <property type="evidence" value="ECO:0000250"/>
    <property type="project" value="UniProtKB"/>
</dbReference>
<dbReference type="GO" id="GO:0043066">
    <property type="term" value="P:negative regulation of apoptotic process"/>
    <property type="evidence" value="ECO:0000250"/>
    <property type="project" value="UniProtKB"/>
</dbReference>
<dbReference type="GO" id="GO:1901029">
    <property type="term" value="P:negative regulation of mitochondrial outer membrane permeabilization involved in apoptotic signaling pathway"/>
    <property type="evidence" value="ECO:0000250"/>
    <property type="project" value="UniProtKB"/>
</dbReference>
<dbReference type="GO" id="GO:0070453">
    <property type="term" value="P:regulation of heme biosynthetic process"/>
    <property type="evidence" value="ECO:0000318"/>
    <property type="project" value="GO_Central"/>
</dbReference>
<dbReference type="FunFam" id="1.10.10.1740:FF:000001">
    <property type="entry name" value="Transmembrane protein 14A"/>
    <property type="match status" value="1"/>
</dbReference>
<dbReference type="Gene3D" id="6.10.250.1330">
    <property type="match status" value="1"/>
</dbReference>
<dbReference type="Gene3D" id="1.10.10.1740">
    <property type="entry name" value="Transmembrane protein 14-like"/>
    <property type="match status" value="1"/>
</dbReference>
<dbReference type="InterPro" id="IPR005349">
    <property type="entry name" value="TMEM14"/>
</dbReference>
<dbReference type="InterPro" id="IPR044890">
    <property type="entry name" value="TMEM14_sf"/>
</dbReference>
<dbReference type="PANTHER" id="PTHR12668">
    <property type="entry name" value="TRANSMEMBRANE PROTEIN 14, 15"/>
    <property type="match status" value="1"/>
</dbReference>
<dbReference type="PANTHER" id="PTHR12668:SF11">
    <property type="entry name" value="TRANSMEMBRANE PROTEIN 14A"/>
    <property type="match status" value="1"/>
</dbReference>
<dbReference type="Pfam" id="PF03647">
    <property type="entry name" value="Tmemb_14"/>
    <property type="match status" value="1"/>
</dbReference>